<evidence type="ECO:0000250" key="1"/>
<evidence type="ECO:0000255" key="2">
    <source>
        <dbReference type="PROSITE-ProRule" id="PRU00541"/>
    </source>
</evidence>
<evidence type="ECO:0000255" key="3">
    <source>
        <dbReference type="PROSITE-ProRule" id="PRU00542"/>
    </source>
</evidence>
<evidence type="ECO:0000256" key="4">
    <source>
        <dbReference type="SAM" id="MobiDB-lite"/>
    </source>
</evidence>
<evidence type="ECO:0000305" key="5"/>
<comment type="function">
    <text evidence="1">ATP-binding RNA helicase involved in ribosome assembly.</text>
</comment>
<comment type="catalytic activity">
    <reaction>
        <text>ATP + H2O = ADP + phosphate + H(+)</text>
        <dbReference type="Rhea" id="RHEA:13065"/>
        <dbReference type="ChEBI" id="CHEBI:15377"/>
        <dbReference type="ChEBI" id="CHEBI:15378"/>
        <dbReference type="ChEBI" id="CHEBI:30616"/>
        <dbReference type="ChEBI" id="CHEBI:43474"/>
        <dbReference type="ChEBI" id="CHEBI:456216"/>
        <dbReference type="EC" id="3.6.4.13"/>
    </reaction>
</comment>
<comment type="subunit">
    <text evidence="1">Associates with pre-ribosomal particles.</text>
</comment>
<comment type="subcellular location">
    <subcellularLocation>
        <location evidence="1">Nucleus</location>
        <location evidence="1">Nucleolus</location>
    </subcellularLocation>
</comment>
<comment type="domain">
    <text>The Q motif is unique to and characteristic of the DEAD box family of RNA helicases and controls ATP binding and hydrolysis.</text>
</comment>
<comment type="similarity">
    <text evidence="5">Belongs to the DEAD box helicase family. DDX27/DRS1 subfamily.</text>
</comment>
<gene>
    <name type="primary">drs1</name>
    <name type="ORF">NFIA_010420</name>
</gene>
<protein>
    <recommendedName>
        <fullName>ATP-dependent RNA helicase drs1</fullName>
        <ecNumber>3.6.4.13</ecNumber>
    </recommendedName>
</protein>
<sequence length="819" mass="90304">MAPNATTKKRAAAKDDDFVLTLSDDENDVLENGVEEDTLSSSKKRKRDAAEAPKGKNKKQKQLKKSKKGESAAGAVSDDQSGEEDEAEAMDAGEDDGALDSEFEFDVGGNANTGVIEGFDGWEARNGAGPADAPKNGDKKAVDIDDIISRRKAKKEAELKKKQQKEKKRREEEGEEESEDEDADSDGGMSVDFQDDELLAADGFGMGADGADESGDDVENDSNDSDDADEKGSEDEESDDDAAASDNDSVATPVHHPDDEAASDEESEAESEVDAEEAEKRKAFFAPEEKSTAASTSNRSFQDFNLSRPILRGLASVNFTTPTPIQQKTIPVALLGKDIVGSAVTGSGKTAAFVVPILERLLFRPRKVPTSRVAILMPTRELAVQCYNVATKLATHTDITFCQLVGGFSLREQENILKKRPDVIIATPGRFIDHMRNSPSFTVDTLEILVLDEADRMLEDGFADELNEILTTIPQSRQTMLFSATMTDSVDKLIRVGLNRPVRLMVDSKKNTSMNLTQEFVRLRPGREDKRLGYLLYLCNEIYTGRVIVFFRQKREAHRVRIVFGLLGLKAAELHGSMSQEQRIKSVENFREGKVAFLLATDLASRGLDIKGVETVINYEAPQSHEIYLHRVGRTARAGRSGRACTIAAEPDRKIVKSAVKAGKAQGAKIVSRVVDPAVADEWAAKAKGLEDEIEEVLQEEKLEKQMAQAEMQVTKGENMIKHEAEIMSRPKRTWFETERDKRAARKLGATELNGPSKKDKVKLSNKDKKRLDDARQRHEGNIGWKKGKADREAPKQGKNKGSKNKSDKKNNIKMKGKK</sequence>
<accession>A1D1R8</accession>
<name>DRS1_NEOFI</name>
<organism>
    <name type="scientific">Neosartorya fischeri (strain ATCC 1020 / DSM 3700 / CBS 544.65 / FGSC A1164 / JCM 1740 / NRRL 181 / WB 181)</name>
    <name type="common">Aspergillus fischerianus</name>
    <dbReference type="NCBI Taxonomy" id="331117"/>
    <lineage>
        <taxon>Eukaryota</taxon>
        <taxon>Fungi</taxon>
        <taxon>Dikarya</taxon>
        <taxon>Ascomycota</taxon>
        <taxon>Pezizomycotina</taxon>
        <taxon>Eurotiomycetes</taxon>
        <taxon>Eurotiomycetidae</taxon>
        <taxon>Eurotiales</taxon>
        <taxon>Aspergillaceae</taxon>
        <taxon>Aspergillus</taxon>
        <taxon>Aspergillus subgen. Fumigati</taxon>
    </lineage>
</organism>
<feature type="chain" id="PRO_0000282493" description="ATP-dependent RNA helicase drs1">
    <location>
        <begin position="1"/>
        <end position="819"/>
    </location>
</feature>
<feature type="domain" description="Helicase ATP-binding" evidence="2">
    <location>
        <begin position="330"/>
        <end position="504"/>
    </location>
</feature>
<feature type="domain" description="Helicase C-terminal" evidence="3">
    <location>
        <begin position="531"/>
        <end position="678"/>
    </location>
</feature>
<feature type="region of interest" description="Disordered" evidence="4">
    <location>
        <begin position="1"/>
        <end position="299"/>
    </location>
</feature>
<feature type="region of interest" description="Disordered" evidence="4">
    <location>
        <begin position="732"/>
        <end position="819"/>
    </location>
</feature>
<feature type="short sequence motif" description="Q motif">
    <location>
        <begin position="299"/>
        <end position="327"/>
    </location>
</feature>
<feature type="short sequence motif" description="DEAD box">
    <location>
        <begin position="452"/>
        <end position="455"/>
    </location>
</feature>
<feature type="compositionally biased region" description="Acidic residues" evidence="4">
    <location>
        <begin position="23"/>
        <end position="38"/>
    </location>
</feature>
<feature type="compositionally biased region" description="Basic residues" evidence="4">
    <location>
        <begin position="55"/>
        <end position="67"/>
    </location>
</feature>
<feature type="compositionally biased region" description="Acidic residues" evidence="4">
    <location>
        <begin position="80"/>
        <end position="105"/>
    </location>
</feature>
<feature type="compositionally biased region" description="Basic and acidic residues" evidence="4">
    <location>
        <begin position="135"/>
        <end position="161"/>
    </location>
</feature>
<feature type="compositionally biased region" description="Acidic residues" evidence="4">
    <location>
        <begin position="173"/>
        <end position="185"/>
    </location>
</feature>
<feature type="compositionally biased region" description="Acidic residues" evidence="4">
    <location>
        <begin position="210"/>
        <end position="243"/>
    </location>
</feature>
<feature type="compositionally biased region" description="Acidic residues" evidence="4">
    <location>
        <begin position="260"/>
        <end position="277"/>
    </location>
</feature>
<feature type="compositionally biased region" description="Basic and acidic residues" evidence="4">
    <location>
        <begin position="278"/>
        <end position="291"/>
    </location>
</feature>
<feature type="compositionally biased region" description="Basic and acidic residues" evidence="4">
    <location>
        <begin position="732"/>
        <end position="742"/>
    </location>
</feature>
<feature type="compositionally biased region" description="Basic and acidic residues" evidence="4">
    <location>
        <begin position="757"/>
        <end position="781"/>
    </location>
</feature>
<feature type="binding site" evidence="2">
    <location>
        <begin position="343"/>
        <end position="350"/>
    </location>
    <ligand>
        <name>ATP</name>
        <dbReference type="ChEBI" id="CHEBI:30616"/>
    </ligand>
</feature>
<dbReference type="EC" id="3.6.4.13"/>
<dbReference type="EMBL" id="DS027688">
    <property type="protein sequence ID" value="EAW22361.1"/>
    <property type="molecule type" value="Genomic_DNA"/>
</dbReference>
<dbReference type="RefSeq" id="XP_001264258.1">
    <property type="nucleotide sequence ID" value="XM_001264257.1"/>
</dbReference>
<dbReference type="SMR" id="A1D1R8"/>
<dbReference type="STRING" id="331117.A1D1R8"/>
<dbReference type="EnsemblFungi" id="EAW22361">
    <property type="protein sequence ID" value="EAW22361"/>
    <property type="gene ID" value="NFIA_010420"/>
</dbReference>
<dbReference type="GeneID" id="4591505"/>
<dbReference type="KEGG" id="nfi:NFIA_010420"/>
<dbReference type="VEuPathDB" id="FungiDB:NFIA_010420"/>
<dbReference type="eggNOG" id="KOG0338">
    <property type="taxonomic scope" value="Eukaryota"/>
</dbReference>
<dbReference type="HOGENOM" id="CLU_003041_3_1_1"/>
<dbReference type="OMA" id="MIDPPKQ"/>
<dbReference type="OrthoDB" id="10259843at2759"/>
<dbReference type="Proteomes" id="UP000006702">
    <property type="component" value="Unassembled WGS sequence"/>
</dbReference>
<dbReference type="GO" id="GO:0005829">
    <property type="term" value="C:cytosol"/>
    <property type="evidence" value="ECO:0007669"/>
    <property type="project" value="TreeGrafter"/>
</dbReference>
<dbReference type="GO" id="GO:0005730">
    <property type="term" value="C:nucleolus"/>
    <property type="evidence" value="ECO:0007669"/>
    <property type="project" value="UniProtKB-SubCell"/>
</dbReference>
<dbReference type="GO" id="GO:0030687">
    <property type="term" value="C:preribosome, large subunit precursor"/>
    <property type="evidence" value="ECO:0007669"/>
    <property type="project" value="EnsemblFungi"/>
</dbReference>
<dbReference type="GO" id="GO:0005524">
    <property type="term" value="F:ATP binding"/>
    <property type="evidence" value="ECO:0007669"/>
    <property type="project" value="UniProtKB-KW"/>
</dbReference>
<dbReference type="GO" id="GO:0016887">
    <property type="term" value="F:ATP hydrolysis activity"/>
    <property type="evidence" value="ECO:0007669"/>
    <property type="project" value="RHEA"/>
</dbReference>
<dbReference type="GO" id="GO:0003723">
    <property type="term" value="F:RNA binding"/>
    <property type="evidence" value="ECO:0007669"/>
    <property type="project" value="UniProtKB-KW"/>
</dbReference>
<dbReference type="GO" id="GO:0003724">
    <property type="term" value="F:RNA helicase activity"/>
    <property type="evidence" value="ECO:0007669"/>
    <property type="project" value="UniProtKB-EC"/>
</dbReference>
<dbReference type="GO" id="GO:0000027">
    <property type="term" value="P:ribosomal large subunit assembly"/>
    <property type="evidence" value="ECO:0007669"/>
    <property type="project" value="EnsemblFungi"/>
</dbReference>
<dbReference type="GO" id="GO:0006364">
    <property type="term" value="P:rRNA processing"/>
    <property type="evidence" value="ECO:0007669"/>
    <property type="project" value="EnsemblFungi"/>
</dbReference>
<dbReference type="CDD" id="cd17947">
    <property type="entry name" value="DEADc_DDX27"/>
    <property type="match status" value="1"/>
</dbReference>
<dbReference type="CDD" id="cd18787">
    <property type="entry name" value="SF2_C_DEAD"/>
    <property type="match status" value="1"/>
</dbReference>
<dbReference type="Gene3D" id="3.40.50.300">
    <property type="entry name" value="P-loop containing nucleotide triphosphate hydrolases"/>
    <property type="match status" value="2"/>
</dbReference>
<dbReference type="InterPro" id="IPR011545">
    <property type="entry name" value="DEAD/DEAH_box_helicase_dom"/>
</dbReference>
<dbReference type="InterPro" id="IPR050079">
    <property type="entry name" value="DEAD_box_RNA_helicase"/>
</dbReference>
<dbReference type="InterPro" id="IPR014001">
    <property type="entry name" value="Helicase_ATP-bd"/>
</dbReference>
<dbReference type="InterPro" id="IPR001650">
    <property type="entry name" value="Helicase_C-like"/>
</dbReference>
<dbReference type="InterPro" id="IPR027417">
    <property type="entry name" value="P-loop_NTPase"/>
</dbReference>
<dbReference type="InterPro" id="IPR000629">
    <property type="entry name" value="RNA-helicase_DEAD-box_CS"/>
</dbReference>
<dbReference type="InterPro" id="IPR014014">
    <property type="entry name" value="RNA_helicase_DEAD_Q_motif"/>
</dbReference>
<dbReference type="PANTHER" id="PTHR47959:SF1">
    <property type="entry name" value="ATP-DEPENDENT RNA HELICASE DBPA"/>
    <property type="match status" value="1"/>
</dbReference>
<dbReference type="PANTHER" id="PTHR47959">
    <property type="entry name" value="ATP-DEPENDENT RNA HELICASE RHLE-RELATED"/>
    <property type="match status" value="1"/>
</dbReference>
<dbReference type="Pfam" id="PF00270">
    <property type="entry name" value="DEAD"/>
    <property type="match status" value="1"/>
</dbReference>
<dbReference type="Pfam" id="PF00271">
    <property type="entry name" value="Helicase_C"/>
    <property type="match status" value="1"/>
</dbReference>
<dbReference type="SMART" id="SM00487">
    <property type="entry name" value="DEXDc"/>
    <property type="match status" value="1"/>
</dbReference>
<dbReference type="SMART" id="SM00490">
    <property type="entry name" value="HELICc"/>
    <property type="match status" value="1"/>
</dbReference>
<dbReference type="SUPFAM" id="SSF52540">
    <property type="entry name" value="P-loop containing nucleoside triphosphate hydrolases"/>
    <property type="match status" value="2"/>
</dbReference>
<dbReference type="PROSITE" id="PS00039">
    <property type="entry name" value="DEAD_ATP_HELICASE"/>
    <property type="match status" value="1"/>
</dbReference>
<dbReference type="PROSITE" id="PS51192">
    <property type="entry name" value="HELICASE_ATP_BIND_1"/>
    <property type="match status" value="1"/>
</dbReference>
<dbReference type="PROSITE" id="PS51194">
    <property type="entry name" value="HELICASE_CTER"/>
    <property type="match status" value="1"/>
</dbReference>
<dbReference type="PROSITE" id="PS51195">
    <property type="entry name" value="Q_MOTIF"/>
    <property type="match status" value="1"/>
</dbReference>
<keyword id="KW-0067">ATP-binding</keyword>
<keyword id="KW-0347">Helicase</keyword>
<keyword id="KW-0378">Hydrolase</keyword>
<keyword id="KW-0547">Nucleotide-binding</keyword>
<keyword id="KW-0539">Nucleus</keyword>
<keyword id="KW-1185">Reference proteome</keyword>
<keyword id="KW-0690">Ribosome biogenesis</keyword>
<keyword id="KW-0694">RNA-binding</keyword>
<proteinExistence type="inferred from homology"/>
<reference key="1">
    <citation type="journal article" date="2008" name="PLoS Genet.">
        <title>Genomic islands in the pathogenic filamentous fungus Aspergillus fumigatus.</title>
        <authorList>
            <person name="Fedorova N.D."/>
            <person name="Khaldi N."/>
            <person name="Joardar V.S."/>
            <person name="Maiti R."/>
            <person name="Amedeo P."/>
            <person name="Anderson M.J."/>
            <person name="Crabtree J."/>
            <person name="Silva J.C."/>
            <person name="Badger J.H."/>
            <person name="Albarraq A."/>
            <person name="Angiuoli S."/>
            <person name="Bussey H."/>
            <person name="Bowyer P."/>
            <person name="Cotty P.J."/>
            <person name="Dyer P.S."/>
            <person name="Egan A."/>
            <person name="Galens K."/>
            <person name="Fraser-Liggett C.M."/>
            <person name="Haas B.J."/>
            <person name="Inman J.M."/>
            <person name="Kent R."/>
            <person name="Lemieux S."/>
            <person name="Malavazi I."/>
            <person name="Orvis J."/>
            <person name="Roemer T."/>
            <person name="Ronning C.M."/>
            <person name="Sundaram J.P."/>
            <person name="Sutton G."/>
            <person name="Turner G."/>
            <person name="Venter J.C."/>
            <person name="White O.R."/>
            <person name="Whitty B.R."/>
            <person name="Youngman P."/>
            <person name="Wolfe K.H."/>
            <person name="Goldman G.H."/>
            <person name="Wortman J.R."/>
            <person name="Jiang B."/>
            <person name="Denning D.W."/>
            <person name="Nierman W.C."/>
        </authorList>
    </citation>
    <scope>NUCLEOTIDE SEQUENCE [LARGE SCALE GENOMIC DNA]</scope>
    <source>
        <strain>ATCC 1020 / DSM 3700 / CBS 544.65 / FGSC A1164 / JCM 1740 / NRRL 181 / WB 181</strain>
    </source>
</reference>